<dbReference type="EMBL" id="CH933808">
    <property type="protein sequence ID" value="EDW08324.1"/>
    <property type="molecule type" value="Genomic_DNA"/>
</dbReference>
<dbReference type="SMR" id="B4KRQ4"/>
<dbReference type="FunCoup" id="B4KRQ4">
    <property type="interactions" value="3168"/>
</dbReference>
<dbReference type="EnsemblMetazoa" id="FBtr0170369">
    <property type="protein sequence ID" value="FBpp0168861"/>
    <property type="gene ID" value="FBgn0142381"/>
</dbReference>
<dbReference type="EnsemblMetazoa" id="XM_002004353.4">
    <property type="protein sequence ID" value="XP_002004389.1"/>
    <property type="gene ID" value="LOC6578478"/>
</dbReference>
<dbReference type="GeneID" id="6578478"/>
<dbReference type="KEGG" id="dmo:Dmoj_GI19644"/>
<dbReference type="eggNOG" id="KOG0308">
    <property type="taxonomic scope" value="Eukaryota"/>
</dbReference>
<dbReference type="HOGENOM" id="CLU_014960_0_1_1"/>
<dbReference type="InParanoid" id="B4KRQ4"/>
<dbReference type="OMA" id="IRHYHIL"/>
<dbReference type="OrthoDB" id="2421129at2759"/>
<dbReference type="PhylomeDB" id="B4KRQ4"/>
<dbReference type="Proteomes" id="UP000009192">
    <property type="component" value="Unassembled WGS sequence"/>
</dbReference>
<dbReference type="GO" id="GO:0043130">
    <property type="term" value="F:ubiquitin binding"/>
    <property type="evidence" value="ECO:0007669"/>
    <property type="project" value="TreeGrafter"/>
</dbReference>
<dbReference type="GO" id="GO:0000724">
    <property type="term" value="P:double-strand break repair via homologous recombination"/>
    <property type="evidence" value="ECO:0007669"/>
    <property type="project" value="TreeGrafter"/>
</dbReference>
<dbReference type="CDD" id="cd17041">
    <property type="entry name" value="Ubl_WDR48"/>
    <property type="match status" value="1"/>
</dbReference>
<dbReference type="CDD" id="cd00200">
    <property type="entry name" value="WD40"/>
    <property type="match status" value="1"/>
</dbReference>
<dbReference type="FunFam" id="2.130.10.10:FF:000543">
    <property type="entry name" value="WD repeat-containing protein 48 homolog"/>
    <property type="match status" value="1"/>
</dbReference>
<dbReference type="FunFam" id="2.130.10.10:FF:000984">
    <property type="entry name" value="WD repeat-containing protein 48 homolog"/>
    <property type="match status" value="1"/>
</dbReference>
<dbReference type="Gene3D" id="2.130.10.10">
    <property type="entry name" value="YVTN repeat-like/Quinoprotein amine dehydrogenase"/>
    <property type="match status" value="2"/>
</dbReference>
<dbReference type="InterPro" id="IPR020472">
    <property type="entry name" value="G-protein_beta_WD-40_rep"/>
</dbReference>
<dbReference type="InterPro" id="IPR015943">
    <property type="entry name" value="WD40/YVTN_repeat-like_dom_sf"/>
</dbReference>
<dbReference type="InterPro" id="IPR019775">
    <property type="entry name" value="WD40_repeat_CS"/>
</dbReference>
<dbReference type="InterPro" id="IPR036322">
    <property type="entry name" value="WD40_repeat_dom_sf"/>
</dbReference>
<dbReference type="InterPro" id="IPR001680">
    <property type="entry name" value="WD40_rpt"/>
</dbReference>
<dbReference type="InterPro" id="IPR051246">
    <property type="entry name" value="WDR48"/>
</dbReference>
<dbReference type="InterPro" id="IPR021772">
    <property type="entry name" value="WDR48/Bun107"/>
</dbReference>
<dbReference type="PANTHER" id="PTHR19862">
    <property type="entry name" value="WD REPEAT-CONTAINING PROTEIN 48"/>
    <property type="match status" value="1"/>
</dbReference>
<dbReference type="PANTHER" id="PTHR19862:SF14">
    <property type="entry name" value="WD REPEAT-CONTAINING PROTEIN 48"/>
    <property type="match status" value="1"/>
</dbReference>
<dbReference type="Pfam" id="PF11816">
    <property type="entry name" value="DUF3337"/>
    <property type="match status" value="1"/>
</dbReference>
<dbReference type="Pfam" id="PF00400">
    <property type="entry name" value="WD40"/>
    <property type="match status" value="6"/>
</dbReference>
<dbReference type="PRINTS" id="PR00320">
    <property type="entry name" value="GPROTEINBRPT"/>
</dbReference>
<dbReference type="SMART" id="SM00320">
    <property type="entry name" value="WD40"/>
    <property type="match status" value="8"/>
</dbReference>
<dbReference type="SUPFAM" id="SSF50978">
    <property type="entry name" value="WD40 repeat-like"/>
    <property type="match status" value="1"/>
</dbReference>
<dbReference type="PROSITE" id="PS00678">
    <property type="entry name" value="WD_REPEATS_1"/>
    <property type="match status" value="4"/>
</dbReference>
<dbReference type="PROSITE" id="PS50082">
    <property type="entry name" value="WD_REPEATS_2"/>
    <property type="match status" value="5"/>
</dbReference>
<dbReference type="PROSITE" id="PS50294">
    <property type="entry name" value="WD_REPEATS_REGION"/>
    <property type="match status" value="5"/>
</dbReference>
<gene>
    <name evidence="2" type="primary">Uaf1</name>
    <name type="ORF">GI19644</name>
</gene>
<protein>
    <recommendedName>
        <fullName>WD repeat-containing protein 48 homolog</fullName>
    </recommendedName>
</protein>
<feature type="chain" id="PRO_0000378982" description="WD repeat-containing protein 48 homolog">
    <location>
        <begin position="1"/>
        <end position="679"/>
    </location>
</feature>
<feature type="repeat" description="WD 1" evidence="4">
    <location>
        <begin position="26"/>
        <end position="65"/>
    </location>
</feature>
<feature type="repeat" description="WD 2" evidence="4">
    <location>
        <begin position="71"/>
        <end position="110"/>
    </location>
</feature>
<feature type="repeat" description="WD 3" evidence="4">
    <location>
        <begin position="113"/>
        <end position="152"/>
    </location>
</feature>
<feature type="repeat" description="WD 4" evidence="4">
    <location>
        <begin position="164"/>
        <end position="203"/>
    </location>
</feature>
<feature type="repeat" description="WD 5" evidence="4">
    <location>
        <begin position="206"/>
        <end position="245"/>
    </location>
</feature>
<feature type="repeat" description="WD 6" evidence="4">
    <location>
        <begin position="248"/>
        <end position="287"/>
    </location>
</feature>
<feature type="repeat" description="WD 7" evidence="4">
    <location>
        <begin position="290"/>
        <end position="329"/>
    </location>
</feature>
<feature type="repeat" description="WD 8" evidence="4">
    <location>
        <begin position="349"/>
        <end position="388"/>
    </location>
</feature>
<feature type="region of interest" description="Disordered" evidence="5">
    <location>
        <begin position="594"/>
        <end position="615"/>
    </location>
</feature>
<name>WDR48_DROMO</name>
<sequence>MLTHKTCQARKKMQVSFVIRDAEEKQHRNGVNALQLDSNNGKLYSAGRDAIIRVWNTRTEANEKYIQSMEHHNDWVNDIVLCCNGRNLISASCDTTVKVWNAHKGFCMSTLRTHRDYVQALAYAKDREQVASAGLDKAIFLWDVNTLTALTASNNTVTTSSLTGSKDSIYSLAMNPSGTVIVSGSTENILRIWDPRTCMRSMKLRGHTENVRCLVVSPDGNQVVSGSSDGTIKVWNLGQQRCIQTIHVHKEGVWSLLMSENFQYIISGSRDRNIIVTEMRNPSNKMLVCEEKAPVLSLGYNIDKTGVWATTWNSDIRCWKLPMYDRCVLSSGGMDAQWTLGGTELACIKGGAAIKECTVLNDKRYIITKDSQDQVVVYDVLRVTKKEELGVVDYEEEVKKRNKQVYIPNWFTVDLKTGMPTIVLGQEEVDCFAAWVSIEAGLPECDDPTTEIKINYGKLLLEALLEYWTPPHSMPPNEMEPDVRGNGYFQVPKHTPVIFSEVGGRTVCRLLVRDAAGDSESTLLHETAPQWVTDVVIERNIPKFLKIPFFLQPHPQMTKPERTKKDRLVANEFIQCRKVCEHVLEKVLNAETTPSAGNANNSLQNSQSDANSEGSQLPAEERIELWCNDVIVDPNMDLRTVRHFIWKQSTDLTFQYKTKQNFNFDGSIGDSLERVTRKY</sequence>
<evidence type="ECO:0000250" key="1"/>
<evidence type="ECO:0000250" key="2">
    <source>
        <dbReference type="UniProtKB" id="Q1LZ08"/>
    </source>
</evidence>
<evidence type="ECO:0000250" key="3">
    <source>
        <dbReference type="UniProtKB" id="Q8TAF3"/>
    </source>
</evidence>
<evidence type="ECO:0000255" key="4"/>
<evidence type="ECO:0000256" key="5">
    <source>
        <dbReference type="SAM" id="MobiDB-lite"/>
    </source>
</evidence>
<evidence type="ECO:0000305" key="6"/>
<evidence type="ECO:0000312" key="7">
    <source>
        <dbReference type="Proteomes" id="UP000009192"/>
    </source>
</evidence>
<accession>B4KRQ4</accession>
<reference key="1">
    <citation type="journal article" date="2007" name="Nature">
        <title>Evolution of genes and genomes on the Drosophila phylogeny.</title>
        <authorList>
            <consortium name="Drosophila 12 genomes consortium"/>
        </authorList>
    </citation>
    <scope>NUCLEOTIDE SEQUENCE [LARGE SCALE GENOMIC DNA]</scope>
    <source>
        <strain>Tucson 15081-1352.22</strain>
    </source>
</reference>
<proteinExistence type="inferred from homology"/>
<comment type="function">
    <text evidence="1 2 3">Regulatory component of the Usp12-46 deubiquitylase complex (By similarity). activates deubiquitination by increasing the catalytic turnover without increasing the affinity of deubiquitinating enzymes for the substrate (By similarity). The complex deubiquitylates the wg/wingless-signaling receptor arr/arrow, which stabilizes the receptor and increases its concentration at the cell surface; this enhances the sensitivity of cells to wg/wingless-signal stimulation. This increases the amplitude and spatial range of the signaling response to the wg/wingless morphogen gradient, facilitating the precise concentration-dependent regulation of its target genes. Together with Wdr20 and Usp12-46 required for wg/wingless-mediated signaling in the wing imaginal disc and for wg/wingless-dependent regulation of intestinal stem cell proliferation (By similarity).</text>
</comment>
<comment type="subunit">
    <text evidence="2">Catalytic component of the Usp12-46 deubiquitylase complex consisting of Usp12-46, Wdr20 and Uaf1; regulatory subunit that, together wtih Wdr20, stabilizes Usp12-46. The Usp12-46 deubiquitylase complex associates with arr/arrow; the interaction leads to deubiquitination and stabilization of arr/arrow.</text>
</comment>
<comment type="similarity">
    <text evidence="6">Belongs to the WD repeat WDR48 family.</text>
</comment>
<keyword id="KW-1185">Reference proteome</keyword>
<keyword id="KW-0677">Repeat</keyword>
<keyword id="KW-0833">Ubl conjugation pathway</keyword>
<keyword id="KW-0853">WD repeat</keyword>
<organism evidence="7">
    <name type="scientific">Drosophila mojavensis</name>
    <name type="common">Fruit fly</name>
    <dbReference type="NCBI Taxonomy" id="7230"/>
    <lineage>
        <taxon>Eukaryota</taxon>
        <taxon>Metazoa</taxon>
        <taxon>Ecdysozoa</taxon>
        <taxon>Arthropoda</taxon>
        <taxon>Hexapoda</taxon>
        <taxon>Insecta</taxon>
        <taxon>Pterygota</taxon>
        <taxon>Neoptera</taxon>
        <taxon>Endopterygota</taxon>
        <taxon>Diptera</taxon>
        <taxon>Brachycera</taxon>
        <taxon>Muscomorpha</taxon>
        <taxon>Ephydroidea</taxon>
        <taxon>Drosophilidae</taxon>
        <taxon>Drosophila</taxon>
    </lineage>
</organism>